<name>PG110_VACCW</name>
<gene>
    <name type="primary">OPG110</name>
    <name type="ordered locus">VACWR103</name>
    <name type="ORF">H5R</name>
</gene>
<comment type="function">
    <text evidence="4 5 6 7">Involved in the co-transcriptional or post-transcriptional endoribonucleolytic cleavage that generates sequence-homogeneous 3' ends during late transcription. Involved in postreplicative transcription elongation on intermediate and late genes. Also involved in DNA replication and in multiple steps of virion morphogenesis (PubMed:25855734). Required both for inclusion of virosoplasm into crescents as well as for maturation of immature virions (IV) into mature virions (MV).</text>
</comment>
<comment type="subunit">
    <text evidence="2 3 8">Interacts with the DNA polymerase processivity factor A20. Interacts with B1R kinase. Interacts with the late transcription factors VLTF-1 and VLTF-3. Interacts with the late transcription elongation factor G2. Interacts with itself. Might be part of a transcription complex composed at least of G2, A18, and H5.</text>
</comment>
<comment type="interaction">
    <interactant intactId="EBI-7272435">
        <id>P07242</id>
    </interactant>
    <interactant intactId="EBI-7273347">
        <id>P68456</id>
        <label>OPG087</label>
    </interactant>
    <organismsDiffer>false</organismsDiffer>
    <experiments>4</experiments>
</comment>
<comment type="interaction">
    <interactant intactId="EBI-7272435">
        <id>P07242</id>
    </interactant>
    <interactant intactId="EBI-7273218">
        <id>P68613</id>
        <label>OPG093</label>
    </interactant>
    <organismsDiffer>false</organismsDiffer>
    <experiments>4</experiments>
</comment>
<comment type="interaction">
    <interactant intactId="EBI-7272435">
        <id>P07242</id>
    </interactant>
    <interactant intactId="EBI-7366338">
        <id>P68318</id>
        <label>OPG127</label>
    </interactant>
    <organismsDiffer>true</organismsDiffer>
    <experiments>2</experiments>
</comment>
<comment type="subcellular location">
    <subcellularLocation>
        <location>Virion</location>
    </subcellularLocation>
    <subcellularLocation>
        <location evidence="7">Host cytoplasm</location>
    </subcellularLocation>
    <text evidence="7">Early during viral infection, diffusely localizes within the cytoplasm. Following DNA replication, localizes specifically to virus factories.</text>
</comment>
<comment type="induction">
    <text>Constitutively expressed in abundance during viral replication.</text>
</comment>
<comment type="PTM">
    <text evidence="10 11">Phosphorylated at multiple sites. Phosphorylation is necessary for cleavage activity. Phosphorylated by the viral B1R and F10 kinases (Probable).</text>
</comment>
<comment type="similarity">
    <text evidence="9">Belongs to the orthopoxvirus OPG110 family.</text>
</comment>
<comment type="caution">
    <text evidence="12">Was originally thought to be p35/Ag35, a membrane protein involved in the biogenesis of the viral envelope encoded by H3L gene.</text>
</comment>
<evidence type="ECO:0000256" key="1">
    <source>
        <dbReference type="SAM" id="MobiDB-lite"/>
    </source>
</evidence>
<evidence type="ECO:0000269" key="2">
    <source>
    </source>
</evidence>
<evidence type="ECO:0000269" key="3">
    <source>
    </source>
</evidence>
<evidence type="ECO:0000269" key="4">
    <source>
    </source>
</evidence>
<evidence type="ECO:0000269" key="5">
    <source>
    </source>
</evidence>
<evidence type="ECO:0000269" key="6">
    <source>
    </source>
</evidence>
<evidence type="ECO:0000269" key="7">
    <source>
    </source>
</evidence>
<evidence type="ECO:0000269" key="8">
    <source>
    </source>
</evidence>
<evidence type="ECO:0000305" key="9"/>
<evidence type="ECO:0000305" key="10">
    <source>
    </source>
</evidence>
<evidence type="ECO:0000305" key="11">
    <source>
    </source>
</evidence>
<evidence type="ECO:0000305" key="12">
    <source>
    </source>
</evidence>
<sequence length="203" mass="22300">MAWSITNKADTSSFTKMAEIRAHLKNSAENKDKNEDIFPEDVIIPSTKPKTKRATTPRKPAATKRSTKKEEVEEEVVIEEYHQTTEKNSPSPGVSDIVESVAAVELDDSDGDDEPMVQVEAGKVNHSARSDLSDLKVATDNIVKDLKKIITRISAVSTVLEDVQAAGISRQFTSMTKAITTLSDLVTEGKSKVVRKKVKTCKK</sequence>
<organismHost>
    <name type="scientific">Bos taurus</name>
    <name type="common">Bovine</name>
    <dbReference type="NCBI Taxonomy" id="9913"/>
</organismHost>
<protein>
    <recommendedName>
        <fullName>Late transcription elongation factor OPG110</fullName>
    </recommendedName>
    <alternativeName>
        <fullName>Viral late gene transcription factor 4</fullName>
        <shortName>VLTF-4</shortName>
    </alternativeName>
</protein>
<feature type="chain" id="PRO_0000099204" description="Late transcription elongation factor OPG110">
    <location>
        <begin position="1"/>
        <end position="203"/>
    </location>
</feature>
<feature type="region of interest" description="Disordered" evidence="1">
    <location>
        <begin position="25"/>
        <end position="100"/>
    </location>
</feature>
<feature type="compositionally biased region" description="Basic and acidic residues" evidence="1">
    <location>
        <begin position="25"/>
        <end position="36"/>
    </location>
</feature>
<feature type="compositionally biased region" description="Basic residues" evidence="1">
    <location>
        <begin position="49"/>
        <end position="67"/>
    </location>
</feature>
<feature type="modified residue" description="Phosphothreonine" evidence="10">
    <location>
        <position position="84"/>
    </location>
</feature>
<feature type="modified residue" description="Phosphothreonine" evidence="10">
    <location>
        <position position="85"/>
    </location>
</feature>
<feature type="sequence variant" description="In strain: Dts57.">
    <original>G</original>
    <variation>R</variation>
    <location>
        <position position="189"/>
    </location>
</feature>
<dbReference type="EMBL" id="M13209">
    <property type="protein sequence ID" value="AAB59841.1"/>
    <property type="molecule type" value="Genomic_DNA"/>
</dbReference>
<dbReference type="EMBL" id="M23648">
    <property type="protein sequence ID" value="AAA47962.1"/>
    <property type="molecule type" value="Genomic_DNA"/>
</dbReference>
<dbReference type="EMBL" id="AY243312">
    <property type="protein sequence ID" value="AAO89382.1"/>
    <property type="molecule type" value="Genomic_DNA"/>
</dbReference>
<dbReference type="PIR" id="F24481">
    <property type="entry name" value="QQVZH6"/>
</dbReference>
<dbReference type="RefSeq" id="YP_232985.1">
    <property type="nucleotide sequence ID" value="NC_006998.1"/>
</dbReference>
<dbReference type="SMR" id="P07242"/>
<dbReference type="DIP" id="DIP-2164N"/>
<dbReference type="IntAct" id="P07242">
    <property type="interactions" value="9"/>
</dbReference>
<dbReference type="MINT" id="P07242"/>
<dbReference type="iPTMnet" id="P07242"/>
<dbReference type="DNASU" id="3707559"/>
<dbReference type="GeneID" id="3707559"/>
<dbReference type="KEGG" id="vg:3707559"/>
<dbReference type="Proteomes" id="UP000000344">
    <property type="component" value="Genome"/>
</dbReference>
<dbReference type="GO" id="GO:0030430">
    <property type="term" value="C:host cell cytoplasm"/>
    <property type="evidence" value="ECO:0000314"/>
    <property type="project" value="UniProtKB"/>
</dbReference>
<dbReference type="GO" id="GO:0019031">
    <property type="term" value="C:viral envelope"/>
    <property type="evidence" value="ECO:0007669"/>
    <property type="project" value="InterPro"/>
</dbReference>
<dbReference type="GO" id="GO:0039693">
    <property type="term" value="P:viral DNA genome replication"/>
    <property type="evidence" value="ECO:0000314"/>
    <property type="project" value="UniProtKB"/>
</dbReference>
<dbReference type="GO" id="GO:0019083">
    <property type="term" value="P:viral transcription"/>
    <property type="evidence" value="ECO:0000314"/>
    <property type="project" value="UniProtKB"/>
</dbReference>
<dbReference type="InterPro" id="IPR004966">
    <property type="entry name" value="Pox_Ag35"/>
</dbReference>
<dbReference type="Pfam" id="PF03286">
    <property type="entry name" value="Pox_Ag35"/>
    <property type="match status" value="1"/>
</dbReference>
<accession>P07242</accession>
<accession>Q76ZS8</accession>
<proteinExistence type="evidence at protein level"/>
<keyword id="KW-0251">Elongation factor</keyword>
<keyword id="KW-1035">Host cytoplasm</keyword>
<keyword id="KW-0597">Phosphoprotein</keyword>
<keyword id="KW-0648">Protein biosynthesis</keyword>
<keyword id="KW-1185">Reference proteome</keyword>
<keyword id="KW-0804">Transcription</keyword>
<keyword id="KW-0805">Transcription regulation</keyword>
<keyword id="KW-0946">Virion</keyword>
<organism>
    <name type="scientific">Vaccinia virus (strain Western Reserve)</name>
    <name type="common">VACV</name>
    <name type="synonym">Vaccinia virus (strain WR)</name>
    <dbReference type="NCBI Taxonomy" id="10254"/>
    <lineage>
        <taxon>Viruses</taxon>
        <taxon>Varidnaviria</taxon>
        <taxon>Bamfordvirae</taxon>
        <taxon>Nucleocytoviricota</taxon>
        <taxon>Pokkesviricetes</taxon>
        <taxon>Chitovirales</taxon>
        <taxon>Poxviridae</taxon>
        <taxon>Chordopoxvirinae</taxon>
        <taxon>Orthopoxvirus</taxon>
        <taxon>Vaccinia virus</taxon>
    </lineage>
</organism>
<reference key="1">
    <citation type="journal article" date="1986" name="J. Virol.">
        <title>Conserved TAAATG sequence at the transcriptional and translational initiation sites of vaccinia virus late genes deduced by structural and functional analysis of the HindIII H genome fragment.</title>
        <authorList>
            <person name="Rosel J.L."/>
            <person name="Earl P.L."/>
            <person name="Weir J.P."/>
            <person name="Moss B."/>
        </authorList>
    </citation>
    <scope>NUCLEOTIDE SEQUENCE [GENOMIC DNA]</scope>
</reference>
<reference key="2">
    <citation type="journal article" date="1988" name="Virology">
        <title>Molecular characterization of a prominent antigen of the vaccinia virus envelope.</title>
        <authorList>
            <person name="Gordon J."/>
            <person name="Kovala T."/>
            <person name="Dales S."/>
        </authorList>
    </citation>
    <scope>NUCLEOTIDE SEQUENCE [GENOMIC DNA]</scope>
</reference>
<reference key="3">
    <citation type="submission" date="2003-02" db="EMBL/GenBank/DDBJ databases">
        <title>Sequencing of the coding region of Vaccinia-WR to an average 9-fold redundancy and an error rate of 0.16/10kb.</title>
        <authorList>
            <person name="Esposito J.J."/>
            <person name="Frace A.M."/>
            <person name="Sammons S.A."/>
            <person name="Olsen-Rasmussen M."/>
            <person name="Osborne J."/>
            <person name="Wohlhueter R."/>
        </authorList>
    </citation>
    <scope>NUCLEOTIDE SEQUENCE [LARGE SCALE GENOMIC DNA]</scope>
</reference>
<reference key="4">
    <citation type="journal article" date="2010" name="Virology">
        <title>Vaccinia H5 is a multifunctional protein involved in viral DNA replication, postreplicative gene transcription, and virion morphogenesis.</title>
        <authorList>
            <person name="D'Costa S.M."/>
            <person name="Bainbridge T.W."/>
            <person name="Kato S.E."/>
            <person name="Prins C."/>
            <person name="Kelley K."/>
            <person name="Condit R.C."/>
        </authorList>
    </citation>
    <scope>NUCLEOTIDE SEQUENCE [GENOMIC DNA]</scope>
    <scope>FUNCTION</scope>
    <source>
        <strain>Dts57</strain>
        <strain>IHDW</strain>
        <strain>WR</strain>
    </source>
</reference>
<reference key="5">
    <citation type="journal article" date="1996" name="J. Virol.">
        <title>The vaccinia virus H5R gene encodes late gene transcription factor 4: purification, cloning, and overexpression.</title>
        <authorList>
            <person name="Kovacs G.R."/>
            <person name="Moss B."/>
        </authorList>
    </citation>
    <scope>IDENTIFICATION</scope>
    <scope>SUBCELLULAR LOCATION</scope>
</reference>
<reference key="6">
    <citation type="journal article" date="1998" name="Virology">
        <title>Characterization of the interactions among vaccinia virus transcription factors G2R, A18R, and H5R.</title>
        <authorList>
            <person name="Black E.P."/>
            <person name="Moussatche N."/>
            <person name="Condit R.C."/>
        </authorList>
    </citation>
    <scope>INTERACTION WITH THE LATE TRANSCRIPTION ELONGATION FACTOR G2</scope>
    <scope>POSSIBLE IDENTIFICATION IN A COMPLEX WITH A18 AND G2</scope>
</reference>
<reference key="7">
    <citation type="journal article" date="2000" name="J. Gen. Virol.">
        <title>The punctate sites of accumulation of vaccinia virus early proteins are precursors of sites of viral DNA synthesis.</title>
        <authorList>
            <person name="Domi A."/>
            <person name="Beaud G."/>
        </authorList>
    </citation>
    <scope>SUBCELLULAR LOCATION</scope>
</reference>
<reference key="8">
    <citation type="journal article" date="2000" name="BMC Biochem.">
        <title>Identification of sites phosphorylated by the vaccinia virus B1R kinase in viral protein H5R.</title>
        <authorList>
            <person name="Brown N.G."/>
            <person name="Nick Morrice D."/>
            <person name="Beaud G."/>
            <person name="Hardie G."/>
            <person name="Leader D.P."/>
        </authorList>
    </citation>
    <scope>PHOSPHORYLATION AT THR-84 AND THR-85</scope>
</reference>
<reference key="9">
    <citation type="journal article" date="2002" name="Virology">
        <title>Mapping interaction sites of the A20R protein component of the vaccinia virus DNA replication complex.</title>
        <authorList>
            <person name="Ishii K."/>
            <person name="Moss B."/>
        </authorList>
    </citation>
    <scope>INTERACTION WITH A20</scope>
</reference>
<reference key="10">
    <citation type="journal article" date="2004" name="Virology">
        <title>Protein interactions among the vaccinia virus late transcription factors.</title>
        <authorList>
            <person name="Dellis S."/>
            <person name="Strickland K.C."/>
            <person name="McCrary W.J."/>
            <person name="Patel A."/>
            <person name="Stocum E."/>
            <person name="Wright C.F."/>
        </authorList>
    </citation>
    <scope>INTERACTION WITH VLTF-1 AND VLTF-3</scope>
</reference>
<reference key="11">
    <citation type="journal article" date="2007" name="Virology">
        <title>A targeted approach to identification of vaccinia virus postreplicative transcription elongation factors: genetic evidence for a role of the H5R gene in vaccinia transcription.</title>
        <authorList>
            <person name="Cresawn S.G."/>
            <person name="Condit R.C."/>
        </authorList>
    </citation>
    <scope>FUNCTION</scope>
</reference>
<reference key="12">
    <citation type="journal article" date="2008" name="J. Biol. Chem.">
        <title>Purification and properties of the vaccinia virus mRNA processing factor.</title>
        <authorList>
            <person name="D'Costa S.M."/>
            <person name="Bainbridge T.W."/>
            <person name="Condit R.C."/>
        </authorList>
    </citation>
    <scope>FUNCTION</scope>
    <scope>PHOSPHORYLATION</scope>
</reference>
<reference key="13">
    <citation type="journal article" date="2015" name="J. Virol.">
        <title>Genetic Confirmation that the H5 Protein Is Required for Vaccinia Virus DNA Replication.</title>
        <authorList>
            <person name="Boyle K.A."/>
            <person name="Greseth M.D."/>
            <person name="Traktman P."/>
        </authorList>
    </citation>
    <scope>FUNCTION</scope>
    <scope>SUBCELLULAR LOCATION</scope>
</reference>